<gene>
    <name evidence="1" type="primary">nrdR</name>
    <name type="ordered locus">COXBURSA331_A1579</name>
</gene>
<protein>
    <recommendedName>
        <fullName evidence="1">Transcriptional repressor NrdR</fullName>
    </recommendedName>
</protein>
<keyword id="KW-0067">ATP-binding</keyword>
<keyword id="KW-0238">DNA-binding</keyword>
<keyword id="KW-0479">Metal-binding</keyword>
<keyword id="KW-0547">Nucleotide-binding</keyword>
<keyword id="KW-0678">Repressor</keyword>
<keyword id="KW-0804">Transcription</keyword>
<keyword id="KW-0805">Transcription regulation</keyword>
<keyword id="KW-0862">Zinc</keyword>
<keyword id="KW-0863">Zinc-finger</keyword>
<evidence type="ECO:0000255" key="1">
    <source>
        <dbReference type="HAMAP-Rule" id="MF_00440"/>
    </source>
</evidence>
<feature type="chain" id="PRO_1000080741" description="Transcriptional repressor NrdR">
    <location>
        <begin position="1"/>
        <end position="157"/>
    </location>
</feature>
<feature type="domain" description="ATP-cone" evidence="1">
    <location>
        <begin position="49"/>
        <end position="139"/>
    </location>
</feature>
<feature type="zinc finger region" evidence="1">
    <location>
        <begin position="3"/>
        <end position="34"/>
    </location>
</feature>
<sequence length="157" mass="18579">MYCPFCNAEDTKVIDSRLVEEGTQVRRRRECLKCQERFTTFETAELNLPRIIKRDGRRSAFDEEKLRAGLLKALEKRPISTEQIETAVQRIIHKLRARGECEVSSQWLGELVMDELRALDEVAYVRFASVYRSFQDINAFRDEIRRLQKQQKKSHDK</sequence>
<organism>
    <name type="scientific">Coxiella burnetii (strain RSA 331 / Henzerling II)</name>
    <dbReference type="NCBI Taxonomy" id="360115"/>
    <lineage>
        <taxon>Bacteria</taxon>
        <taxon>Pseudomonadati</taxon>
        <taxon>Pseudomonadota</taxon>
        <taxon>Gammaproteobacteria</taxon>
        <taxon>Legionellales</taxon>
        <taxon>Coxiellaceae</taxon>
        <taxon>Coxiella</taxon>
    </lineage>
</organism>
<proteinExistence type="inferred from homology"/>
<reference key="1">
    <citation type="submission" date="2007-11" db="EMBL/GenBank/DDBJ databases">
        <title>Genome sequencing of phylogenetically and phenotypically diverse Coxiella burnetii isolates.</title>
        <authorList>
            <person name="Seshadri R."/>
            <person name="Samuel J.E."/>
        </authorList>
    </citation>
    <scope>NUCLEOTIDE SEQUENCE [LARGE SCALE GENOMIC DNA]</scope>
    <source>
        <strain>RSA 331 / Henzerling II</strain>
    </source>
</reference>
<dbReference type="EMBL" id="CP000890">
    <property type="protein sequence ID" value="ABX77574.1"/>
    <property type="molecule type" value="Genomic_DNA"/>
</dbReference>
<dbReference type="RefSeq" id="WP_005771735.1">
    <property type="nucleotide sequence ID" value="NC_010117.1"/>
</dbReference>
<dbReference type="SMR" id="A9N8T7"/>
<dbReference type="KEGG" id="cbs:COXBURSA331_A1579"/>
<dbReference type="HOGENOM" id="CLU_108412_0_0_6"/>
<dbReference type="GO" id="GO:0005524">
    <property type="term" value="F:ATP binding"/>
    <property type="evidence" value="ECO:0007669"/>
    <property type="project" value="UniProtKB-KW"/>
</dbReference>
<dbReference type="GO" id="GO:0003677">
    <property type="term" value="F:DNA binding"/>
    <property type="evidence" value="ECO:0007669"/>
    <property type="project" value="UniProtKB-KW"/>
</dbReference>
<dbReference type="GO" id="GO:0008270">
    <property type="term" value="F:zinc ion binding"/>
    <property type="evidence" value="ECO:0007669"/>
    <property type="project" value="UniProtKB-UniRule"/>
</dbReference>
<dbReference type="GO" id="GO:0045892">
    <property type="term" value="P:negative regulation of DNA-templated transcription"/>
    <property type="evidence" value="ECO:0007669"/>
    <property type="project" value="UniProtKB-UniRule"/>
</dbReference>
<dbReference type="HAMAP" id="MF_00440">
    <property type="entry name" value="NrdR"/>
    <property type="match status" value="1"/>
</dbReference>
<dbReference type="InterPro" id="IPR005144">
    <property type="entry name" value="ATP-cone_dom"/>
</dbReference>
<dbReference type="InterPro" id="IPR055173">
    <property type="entry name" value="NrdR-like_N"/>
</dbReference>
<dbReference type="InterPro" id="IPR003796">
    <property type="entry name" value="RNR_NrdR-like"/>
</dbReference>
<dbReference type="NCBIfam" id="TIGR00244">
    <property type="entry name" value="transcriptional regulator NrdR"/>
    <property type="match status" value="1"/>
</dbReference>
<dbReference type="PANTHER" id="PTHR30455">
    <property type="entry name" value="TRANSCRIPTIONAL REPRESSOR NRDR"/>
    <property type="match status" value="1"/>
</dbReference>
<dbReference type="PANTHER" id="PTHR30455:SF2">
    <property type="entry name" value="TRANSCRIPTIONAL REPRESSOR NRDR"/>
    <property type="match status" value="1"/>
</dbReference>
<dbReference type="Pfam" id="PF03477">
    <property type="entry name" value="ATP-cone"/>
    <property type="match status" value="1"/>
</dbReference>
<dbReference type="Pfam" id="PF22811">
    <property type="entry name" value="Zn_ribbon_NrdR"/>
    <property type="match status" value="1"/>
</dbReference>
<dbReference type="PROSITE" id="PS51161">
    <property type="entry name" value="ATP_CONE"/>
    <property type="match status" value="1"/>
</dbReference>
<comment type="function">
    <text evidence="1">Negatively regulates transcription of bacterial ribonucleotide reductase nrd genes and operons by binding to NrdR-boxes.</text>
</comment>
<comment type="cofactor">
    <cofactor evidence="1">
        <name>Zn(2+)</name>
        <dbReference type="ChEBI" id="CHEBI:29105"/>
    </cofactor>
    <text evidence="1">Binds 1 zinc ion.</text>
</comment>
<comment type="similarity">
    <text evidence="1">Belongs to the NrdR family.</text>
</comment>
<accession>A9N8T7</accession>
<name>NRDR_COXBR</name>